<name>YE008_YEAST</name>
<gene>
    <name type="ordered locus">YEL008C-A</name>
</gene>
<organism>
    <name type="scientific">Saccharomyces cerevisiae (strain ATCC 204508 / S288c)</name>
    <name type="common">Baker's yeast</name>
    <dbReference type="NCBI Taxonomy" id="559292"/>
    <lineage>
        <taxon>Eukaryota</taxon>
        <taxon>Fungi</taxon>
        <taxon>Dikarya</taxon>
        <taxon>Ascomycota</taxon>
        <taxon>Saccharomycotina</taxon>
        <taxon>Saccharomycetes</taxon>
        <taxon>Saccharomycetales</taxon>
        <taxon>Saccharomycetaceae</taxon>
        <taxon>Saccharomyces</taxon>
    </lineage>
</organism>
<sequence length="30" mass="3449">MTLSLINRSTACIQAVEQKYCRVPLPENNR</sequence>
<protein>
    <recommendedName>
        <fullName>Putative uncharacterized protein YEL008C-A</fullName>
    </recommendedName>
</protein>
<accession>Q8TGP3</accession>
<comment type="miscellaneous">
    <text evidence="1">Completely overlaps YEL008W.</text>
</comment>
<comment type="caution">
    <text evidence="2">Product of a dubious gene prediction unlikely to encode a functional protein. Because of that it is not part of the S.cerevisiae S288c complete/reference proteome set.</text>
</comment>
<evidence type="ECO:0000305" key="1"/>
<evidence type="ECO:0000305" key="2">
    <source>
    </source>
</evidence>
<feature type="chain" id="PRO_0000299910" description="Putative uncharacterized protein YEL008C-A">
    <location>
        <begin position="1"/>
        <end position="30"/>
    </location>
</feature>
<dbReference type="EMBL" id="U18530">
    <property type="status" value="NOT_ANNOTATED_CDS"/>
    <property type="molecule type" value="Genomic_DNA"/>
</dbReference>
<dbReference type="EMBL" id="AF479945">
    <property type="protein sequence ID" value="AAL79258.1"/>
    <property type="molecule type" value="Genomic_DNA"/>
</dbReference>
<dbReference type="STRING" id="4932.YEL008C-A"/>
<dbReference type="PaxDb" id="4932-YEL008C-A"/>
<dbReference type="EnsemblFungi" id="YEL008C-A_mRNA">
    <property type="protein sequence ID" value="YEL008C-A"/>
    <property type="gene ID" value="YEL008C-A"/>
</dbReference>
<dbReference type="AGR" id="SGD:S000028618"/>
<dbReference type="SGD" id="S000028618">
    <property type="gene designation" value="YEL008C-A"/>
</dbReference>
<dbReference type="HOGENOM" id="CLU_3406602_0_0_1"/>
<reference key="1">
    <citation type="journal article" date="1997" name="Nature">
        <title>The nucleotide sequence of Saccharomyces cerevisiae chromosome V.</title>
        <authorList>
            <person name="Dietrich F.S."/>
            <person name="Mulligan J.T."/>
            <person name="Hennessy K.M."/>
            <person name="Yelton M.A."/>
            <person name="Allen E."/>
            <person name="Araujo R."/>
            <person name="Aviles E."/>
            <person name="Berno A."/>
            <person name="Brennan T."/>
            <person name="Carpenter J."/>
            <person name="Chen E."/>
            <person name="Cherry J.M."/>
            <person name="Chung E."/>
            <person name="Duncan M."/>
            <person name="Guzman E."/>
            <person name="Hartzell G."/>
            <person name="Hunicke-Smith S."/>
            <person name="Hyman R.W."/>
            <person name="Kayser A."/>
            <person name="Komp C."/>
            <person name="Lashkari D."/>
            <person name="Lew H."/>
            <person name="Lin D."/>
            <person name="Mosedale D."/>
            <person name="Nakahara K."/>
            <person name="Namath A."/>
            <person name="Norgren R."/>
            <person name="Oefner P."/>
            <person name="Oh C."/>
            <person name="Petel F.X."/>
            <person name="Roberts D."/>
            <person name="Sehl P."/>
            <person name="Schramm S."/>
            <person name="Shogren T."/>
            <person name="Smith V."/>
            <person name="Taylor P."/>
            <person name="Wei Y."/>
            <person name="Botstein D."/>
            <person name="Davis R.W."/>
        </authorList>
    </citation>
    <scope>NUCLEOTIDE SEQUENCE [LARGE SCALE GENOMIC DNA]</scope>
    <source>
        <strain>ATCC 204508 / S288c</strain>
    </source>
</reference>
<reference key="2">
    <citation type="journal article" date="2014" name="G3 (Bethesda)">
        <title>The reference genome sequence of Saccharomyces cerevisiae: Then and now.</title>
        <authorList>
            <person name="Engel S.R."/>
            <person name="Dietrich F.S."/>
            <person name="Fisk D.G."/>
            <person name="Binkley G."/>
            <person name="Balakrishnan R."/>
            <person name="Costanzo M.C."/>
            <person name="Dwight S.S."/>
            <person name="Hitz B.C."/>
            <person name="Karra K."/>
            <person name="Nash R.S."/>
            <person name="Weng S."/>
            <person name="Wong E.D."/>
            <person name="Lloyd P."/>
            <person name="Skrzypek M.S."/>
            <person name="Miyasato S.R."/>
            <person name="Simison M."/>
            <person name="Cherry J.M."/>
        </authorList>
    </citation>
    <scope>GENOME REANNOTATION</scope>
    <source>
        <strain>ATCC 204508 / S288c</strain>
    </source>
</reference>
<reference key="3">
    <citation type="journal article" date="2002" name="Nat. Biotechnol.">
        <title>An integrated approach for finding overlooked genes in yeast.</title>
        <authorList>
            <person name="Kumar A."/>
            <person name="Harrison P.M."/>
            <person name="Cheung K.-H."/>
            <person name="Lan N."/>
            <person name="Echols N."/>
            <person name="Bertone P."/>
            <person name="Miller P."/>
            <person name="Gerstein M.B."/>
            <person name="Snyder M."/>
        </authorList>
    </citation>
    <scope>NUCLEOTIDE SEQUENCE [GENOMIC DNA]</scope>
</reference>
<proteinExistence type="uncertain"/>